<protein>
    <recommendedName>
        <fullName evidence="7">Protein HBS1</fullName>
        <ecNumber evidence="1">3.6.5.-</ecNumber>
    </recommendedName>
</protein>
<keyword id="KW-0963">Cytoplasm</keyword>
<keyword id="KW-0342">GTP-binding</keyword>
<keyword id="KW-0378">Hydrolase</keyword>
<keyword id="KW-0547">Nucleotide-binding</keyword>
<keyword id="KW-0597">Phosphoprotein</keyword>
<keyword id="KW-0648">Protein biosynthesis</keyword>
<keyword id="KW-1185">Reference proteome</keyword>
<keyword id="KW-0810">Translation regulation</keyword>
<comment type="function">
    <text evidence="2 5 6">GTPase component of the Pelota-HBS1L complex, a complex that recognizes stalled ribosomes and triggers the No-Go Decay (NGD) pathway (By similarity). The Pelota-HBS1L complex recognizes ribosomes stalled at the 3' end of an mRNA and engages stalled ribosomes by destabilizing mRNA in the mRNA channel (By similarity). Following ribosome-binding, the Pelota-HBS1L complex promotes recruitment of pix, which drives the disassembly of stalled ribosomes, followed by degradation of damaged mRNAs as part of the NGD pathway (By similarity). Together with pelo, required for transposon silencing in the ovary and testis (PubMed:26124316). Together with pelo, promotes meiosis and spermatid individualization during spermatogenesis (PubMed:30824860).</text>
</comment>
<comment type="catalytic activity">
    <reaction evidence="1">
        <text>GTP + H2O = GDP + phosphate + H(+)</text>
        <dbReference type="Rhea" id="RHEA:19669"/>
        <dbReference type="ChEBI" id="CHEBI:15377"/>
        <dbReference type="ChEBI" id="CHEBI:15378"/>
        <dbReference type="ChEBI" id="CHEBI:37565"/>
        <dbReference type="ChEBI" id="CHEBI:43474"/>
        <dbReference type="ChEBI" id="CHEBI:58189"/>
    </reaction>
    <physiologicalReaction direction="left-to-right" evidence="1">
        <dbReference type="Rhea" id="RHEA:19670"/>
    </physiologicalReaction>
</comment>
<comment type="subunit">
    <text evidence="5 6">Component of the Pelota-HBS1L complex, also named Dom34-Hbs1 complex, composed of pelo and HBS1.</text>
</comment>
<comment type="subcellular location">
    <subcellularLocation>
        <location evidence="6">Cytoplasm</location>
    </subcellularLocation>
</comment>
<comment type="tissue specificity">
    <text evidence="5">Expressed in ovaries (at protein level).</text>
</comment>
<comment type="disruption phenotype">
    <text evidence="5 6">In germlines, increases transposable elements transcription at both mRNA and protein levels (PubMed:26124316). Results in male sterility: male testes are morphologically normal but no mature sperm is formed (PubMed:30824860). Results in defective meiosis and spermatid individualization during spermatogenesis (PubMed:30824860).</text>
</comment>
<comment type="similarity">
    <text evidence="3">Belongs to the TRAFAC class translation factor GTPase superfamily. Classic translation factor GTPase family.</text>
</comment>
<name>HBS1_DROME</name>
<gene>
    <name evidence="10" type="primary">HBS1</name>
    <name evidence="10" type="ORF">CG1898</name>
</gene>
<proteinExistence type="evidence at protein level"/>
<organism evidence="11">
    <name type="scientific">Drosophila melanogaster</name>
    <name type="common">Fruit fly</name>
    <dbReference type="NCBI Taxonomy" id="7227"/>
    <lineage>
        <taxon>Eukaryota</taxon>
        <taxon>Metazoa</taxon>
        <taxon>Ecdysozoa</taxon>
        <taxon>Arthropoda</taxon>
        <taxon>Hexapoda</taxon>
        <taxon>Insecta</taxon>
        <taxon>Pterygota</taxon>
        <taxon>Neoptera</taxon>
        <taxon>Endopterygota</taxon>
        <taxon>Diptera</taxon>
        <taxon>Brachycera</taxon>
        <taxon>Muscomorpha</taxon>
        <taxon>Ephydroidea</taxon>
        <taxon>Drosophilidae</taxon>
        <taxon>Drosophila</taxon>
        <taxon>Sophophora</taxon>
    </lineage>
</organism>
<reference evidence="11" key="1">
    <citation type="journal article" date="2000" name="Science">
        <title>The genome sequence of Drosophila melanogaster.</title>
        <authorList>
            <person name="Adams M.D."/>
            <person name="Celniker S.E."/>
            <person name="Holt R.A."/>
            <person name="Evans C.A."/>
            <person name="Gocayne J.D."/>
            <person name="Amanatides P.G."/>
            <person name="Scherer S.E."/>
            <person name="Li P.W."/>
            <person name="Hoskins R.A."/>
            <person name="Galle R.F."/>
            <person name="George R.A."/>
            <person name="Lewis S.E."/>
            <person name="Richards S."/>
            <person name="Ashburner M."/>
            <person name="Henderson S.N."/>
            <person name="Sutton G.G."/>
            <person name="Wortman J.R."/>
            <person name="Yandell M.D."/>
            <person name="Zhang Q."/>
            <person name="Chen L.X."/>
            <person name="Brandon R.C."/>
            <person name="Rogers Y.-H.C."/>
            <person name="Blazej R.G."/>
            <person name="Champe M."/>
            <person name="Pfeiffer B.D."/>
            <person name="Wan K.H."/>
            <person name="Doyle C."/>
            <person name="Baxter E.G."/>
            <person name="Helt G."/>
            <person name="Nelson C.R."/>
            <person name="Miklos G.L.G."/>
            <person name="Abril J.F."/>
            <person name="Agbayani A."/>
            <person name="An H.-J."/>
            <person name="Andrews-Pfannkoch C."/>
            <person name="Baldwin D."/>
            <person name="Ballew R.M."/>
            <person name="Basu A."/>
            <person name="Baxendale J."/>
            <person name="Bayraktaroglu L."/>
            <person name="Beasley E.M."/>
            <person name="Beeson K.Y."/>
            <person name="Benos P.V."/>
            <person name="Berman B.P."/>
            <person name="Bhandari D."/>
            <person name="Bolshakov S."/>
            <person name="Borkova D."/>
            <person name="Botchan M.R."/>
            <person name="Bouck J."/>
            <person name="Brokstein P."/>
            <person name="Brottier P."/>
            <person name="Burtis K.C."/>
            <person name="Busam D.A."/>
            <person name="Butler H."/>
            <person name="Cadieu E."/>
            <person name="Center A."/>
            <person name="Chandra I."/>
            <person name="Cherry J.M."/>
            <person name="Cawley S."/>
            <person name="Dahlke C."/>
            <person name="Davenport L.B."/>
            <person name="Davies P."/>
            <person name="de Pablos B."/>
            <person name="Delcher A."/>
            <person name="Deng Z."/>
            <person name="Mays A.D."/>
            <person name="Dew I."/>
            <person name="Dietz S.M."/>
            <person name="Dodson K."/>
            <person name="Doup L.E."/>
            <person name="Downes M."/>
            <person name="Dugan-Rocha S."/>
            <person name="Dunkov B.C."/>
            <person name="Dunn P."/>
            <person name="Durbin K.J."/>
            <person name="Evangelista C.C."/>
            <person name="Ferraz C."/>
            <person name="Ferriera S."/>
            <person name="Fleischmann W."/>
            <person name="Fosler C."/>
            <person name="Gabrielian A.E."/>
            <person name="Garg N.S."/>
            <person name="Gelbart W.M."/>
            <person name="Glasser K."/>
            <person name="Glodek A."/>
            <person name="Gong F."/>
            <person name="Gorrell J.H."/>
            <person name="Gu Z."/>
            <person name="Guan P."/>
            <person name="Harris M."/>
            <person name="Harris N.L."/>
            <person name="Harvey D.A."/>
            <person name="Heiman T.J."/>
            <person name="Hernandez J.R."/>
            <person name="Houck J."/>
            <person name="Hostin D."/>
            <person name="Houston K.A."/>
            <person name="Howland T.J."/>
            <person name="Wei M.-H."/>
            <person name="Ibegwam C."/>
            <person name="Jalali M."/>
            <person name="Kalush F."/>
            <person name="Karpen G.H."/>
            <person name="Ke Z."/>
            <person name="Kennison J.A."/>
            <person name="Ketchum K.A."/>
            <person name="Kimmel B.E."/>
            <person name="Kodira C.D."/>
            <person name="Kraft C.L."/>
            <person name="Kravitz S."/>
            <person name="Kulp D."/>
            <person name="Lai Z."/>
            <person name="Lasko P."/>
            <person name="Lei Y."/>
            <person name="Levitsky A.A."/>
            <person name="Li J.H."/>
            <person name="Li Z."/>
            <person name="Liang Y."/>
            <person name="Lin X."/>
            <person name="Liu X."/>
            <person name="Mattei B."/>
            <person name="McIntosh T.C."/>
            <person name="McLeod M.P."/>
            <person name="McPherson D."/>
            <person name="Merkulov G."/>
            <person name="Milshina N.V."/>
            <person name="Mobarry C."/>
            <person name="Morris J."/>
            <person name="Moshrefi A."/>
            <person name="Mount S.M."/>
            <person name="Moy M."/>
            <person name="Murphy B."/>
            <person name="Murphy L."/>
            <person name="Muzny D.M."/>
            <person name="Nelson D.L."/>
            <person name="Nelson D.R."/>
            <person name="Nelson K.A."/>
            <person name="Nixon K."/>
            <person name="Nusskern D.R."/>
            <person name="Pacleb J.M."/>
            <person name="Palazzolo M."/>
            <person name="Pittman G.S."/>
            <person name="Pan S."/>
            <person name="Pollard J."/>
            <person name="Puri V."/>
            <person name="Reese M.G."/>
            <person name="Reinert K."/>
            <person name="Remington K."/>
            <person name="Saunders R.D.C."/>
            <person name="Scheeler F."/>
            <person name="Shen H."/>
            <person name="Shue B.C."/>
            <person name="Siden-Kiamos I."/>
            <person name="Simpson M."/>
            <person name="Skupski M.P."/>
            <person name="Smith T.J."/>
            <person name="Spier E."/>
            <person name="Spradling A.C."/>
            <person name="Stapleton M."/>
            <person name="Strong R."/>
            <person name="Sun E."/>
            <person name="Svirskas R."/>
            <person name="Tector C."/>
            <person name="Turner R."/>
            <person name="Venter E."/>
            <person name="Wang A.H."/>
            <person name="Wang X."/>
            <person name="Wang Z.-Y."/>
            <person name="Wassarman D.A."/>
            <person name="Weinstock G.M."/>
            <person name="Weissenbach J."/>
            <person name="Williams S.M."/>
            <person name="Woodage T."/>
            <person name="Worley K.C."/>
            <person name="Wu D."/>
            <person name="Yang S."/>
            <person name="Yao Q.A."/>
            <person name="Ye J."/>
            <person name="Yeh R.-F."/>
            <person name="Zaveri J.S."/>
            <person name="Zhan M."/>
            <person name="Zhang G."/>
            <person name="Zhao Q."/>
            <person name="Zheng L."/>
            <person name="Zheng X.H."/>
            <person name="Zhong F.N."/>
            <person name="Zhong W."/>
            <person name="Zhou X."/>
            <person name="Zhu S.C."/>
            <person name="Zhu X."/>
            <person name="Smith H.O."/>
            <person name="Gibbs R.A."/>
            <person name="Myers E.W."/>
            <person name="Rubin G.M."/>
            <person name="Venter J.C."/>
        </authorList>
    </citation>
    <scope>NUCLEOTIDE SEQUENCE [LARGE SCALE GENOMIC DNA]</scope>
    <source>
        <strain evidence="11">Berkeley</strain>
    </source>
</reference>
<reference evidence="11" key="2">
    <citation type="journal article" date="2002" name="Genome Biol.">
        <title>Annotation of the Drosophila melanogaster euchromatic genome: a systematic review.</title>
        <authorList>
            <person name="Misra S."/>
            <person name="Crosby M.A."/>
            <person name="Mungall C.J."/>
            <person name="Matthews B.B."/>
            <person name="Campbell K.S."/>
            <person name="Hradecky P."/>
            <person name="Huang Y."/>
            <person name="Kaminker J.S."/>
            <person name="Millburn G.H."/>
            <person name="Prochnik S.E."/>
            <person name="Smith C.D."/>
            <person name="Tupy J.L."/>
            <person name="Whitfield E.J."/>
            <person name="Bayraktaroglu L."/>
            <person name="Berman B.P."/>
            <person name="Bettencourt B.R."/>
            <person name="Celniker S.E."/>
            <person name="de Grey A.D.N.J."/>
            <person name="Drysdale R.A."/>
            <person name="Harris N.L."/>
            <person name="Richter J."/>
            <person name="Russo S."/>
            <person name="Schroeder A.J."/>
            <person name="Shu S.Q."/>
            <person name="Stapleton M."/>
            <person name="Yamada C."/>
            <person name="Ashburner M."/>
            <person name="Gelbart W.M."/>
            <person name="Rubin G.M."/>
            <person name="Lewis S.E."/>
        </authorList>
    </citation>
    <scope>GENOME REANNOTATION</scope>
    <source>
        <strain evidence="11">Berkeley</strain>
    </source>
</reference>
<reference evidence="8 9" key="3">
    <citation type="submission" date="2003-02" db="EMBL/GenBank/DDBJ databases">
        <authorList>
            <person name="Stapleton M."/>
            <person name="Booth B."/>
            <person name="Brokstein P."/>
            <person name="Hong L."/>
            <person name="Agbayani A."/>
            <person name="Carlson J."/>
            <person name="Champe M."/>
            <person name="Chavez C."/>
            <person name="Dorsett V."/>
            <person name="Dresnek D."/>
            <person name="Farfan D."/>
            <person name="Frise E."/>
            <person name="George R."/>
            <person name="Gonzalez M."/>
            <person name="Guarin H."/>
            <person name="Kronmiller B."/>
            <person name="Li P."/>
            <person name="Liao G."/>
            <person name="Miranda A."/>
            <person name="Mungall C.J."/>
            <person name="Nunoo J."/>
            <person name="Pacleb J."/>
            <person name="Paragas V."/>
            <person name="Park S."/>
            <person name="Patel S."/>
            <person name="Phouanenavong S."/>
            <person name="Wan K."/>
            <person name="Yu C."/>
            <person name="Lewis S.E."/>
            <person name="Rubin G.M."/>
            <person name="Celniker S."/>
        </authorList>
    </citation>
    <scope>NUCLEOTIDE SEQUENCE [LARGE SCALE MRNA]</scope>
    <source>
        <strain evidence="8">Berkeley</strain>
    </source>
</reference>
<reference evidence="7" key="4">
    <citation type="journal article" date="2015" name="EMBO Rep.">
        <title>The RNA surveillance complex Pelo-Hbs1 is required for transposon silencing in the Drosophila germline.</title>
        <authorList>
            <person name="Yang F."/>
            <person name="Zhao R."/>
            <person name="Fang X."/>
            <person name="Huang H."/>
            <person name="Xuan Y."/>
            <person name="Ma Y."/>
            <person name="Chen H."/>
            <person name="Cai T."/>
            <person name="Qi Y."/>
            <person name="Xi R."/>
        </authorList>
    </citation>
    <scope>FUNCTION</scope>
    <scope>INTERACTION WITH PELO</scope>
    <scope>TISSUE SPECIFICITY</scope>
    <scope>DISRUPTION PHENOTYPE</scope>
</reference>
<reference evidence="7" key="5">
    <citation type="journal article" date="2019" name="Sci. Rep.">
        <title>Pelota-interacting G protein Hbs1 is required for spermatogenesis in Drosophila.</title>
        <authorList>
            <person name="Li Z."/>
            <person name="Yang F."/>
            <person name="Xuan Y."/>
            <person name="Xi R."/>
            <person name="Zhao R."/>
        </authorList>
    </citation>
    <scope>FUNCTION</scope>
    <scope>INTERACTION WITH PELO</scope>
    <scope>SUBCELLULAR LOCATION</scope>
    <scope>DISRUPTION PHENOTYPE</scope>
</reference>
<feature type="chain" id="PRO_0000451922" description="Protein HBS1" evidence="7">
    <location>
        <begin position="1"/>
        <end position="670"/>
    </location>
</feature>
<feature type="domain" description="tr-type G" evidence="3">
    <location>
        <begin position="245"/>
        <end position="468"/>
    </location>
</feature>
<feature type="region of interest" description="Disordered" evidence="4">
    <location>
        <begin position="60"/>
        <end position="88"/>
    </location>
</feature>
<feature type="region of interest" description="Disordered" evidence="4">
    <location>
        <begin position="164"/>
        <end position="202"/>
    </location>
</feature>
<feature type="region of interest" description="G1" evidence="3">
    <location>
        <begin position="254"/>
        <end position="261"/>
    </location>
</feature>
<feature type="region of interest" description="G2" evidence="3">
    <location>
        <begin position="310"/>
        <end position="314"/>
    </location>
</feature>
<feature type="region of interest" description="G3" evidence="3">
    <location>
        <begin position="331"/>
        <end position="334"/>
    </location>
</feature>
<feature type="region of interest" description="G4" evidence="3">
    <location>
        <begin position="393"/>
        <end position="396"/>
    </location>
</feature>
<feature type="region of interest" description="G5" evidence="3">
    <location>
        <begin position="432"/>
        <end position="434"/>
    </location>
</feature>
<feature type="compositionally biased region" description="Acidic residues" evidence="4">
    <location>
        <begin position="63"/>
        <end position="75"/>
    </location>
</feature>
<feature type="compositionally biased region" description="Low complexity" evidence="4">
    <location>
        <begin position="189"/>
        <end position="200"/>
    </location>
</feature>
<feature type="binding site" evidence="1">
    <location>
        <begin position="254"/>
        <end position="261"/>
    </location>
    <ligand>
        <name>GTP</name>
        <dbReference type="ChEBI" id="CHEBI:37565"/>
    </ligand>
</feature>
<feature type="binding site" evidence="1">
    <location>
        <begin position="393"/>
        <end position="396"/>
    </location>
    <ligand>
        <name>GTP</name>
        <dbReference type="ChEBI" id="CHEBI:37565"/>
    </ligand>
</feature>
<feature type="binding site" evidence="1">
    <location>
        <begin position="432"/>
        <end position="434"/>
    </location>
    <ligand>
        <name>GTP</name>
        <dbReference type="ChEBI" id="CHEBI:37565"/>
    </ligand>
</feature>
<feature type="sequence conflict" description="In Ref. 3; AAO41445." evidence="7" ref="3">
    <original>S</original>
    <variation>N</variation>
    <location>
        <position position="556"/>
    </location>
</feature>
<dbReference type="EC" id="3.6.5.-" evidence="1"/>
<dbReference type="EMBL" id="AE014296">
    <property type="protein sequence ID" value="AAF47584.2"/>
    <property type="molecule type" value="Genomic_DNA"/>
</dbReference>
<dbReference type="EMBL" id="AE014296">
    <property type="protein sequence ID" value="AHN57931.1"/>
    <property type="molecule type" value="Genomic_DNA"/>
</dbReference>
<dbReference type="EMBL" id="BT003766">
    <property type="protein sequence ID" value="AAO41445.1"/>
    <property type="molecule type" value="mRNA"/>
</dbReference>
<dbReference type="EMBL" id="BT120040">
    <property type="protein sequence ID" value="ADA53579.1"/>
    <property type="molecule type" value="mRNA"/>
</dbReference>
<dbReference type="RefSeq" id="NP_001286906.1">
    <property type="nucleotide sequence ID" value="NM_001299977.1"/>
</dbReference>
<dbReference type="RefSeq" id="NP_652729.2">
    <property type="nucleotide sequence ID" value="NM_144472.4"/>
</dbReference>
<dbReference type="SMR" id="Q9W074"/>
<dbReference type="FunCoup" id="Q9W074">
    <property type="interactions" value="1666"/>
</dbReference>
<dbReference type="IntAct" id="Q9W074">
    <property type="interactions" value="4"/>
</dbReference>
<dbReference type="STRING" id="7227.FBpp0311793"/>
<dbReference type="GlyGen" id="Q9W074">
    <property type="glycosylation" value="2 sites"/>
</dbReference>
<dbReference type="PaxDb" id="7227-FBpp0072745"/>
<dbReference type="DNASU" id="117365"/>
<dbReference type="EnsemblMetazoa" id="FBtr0072866">
    <property type="protein sequence ID" value="FBpp0072745"/>
    <property type="gene ID" value="FBgn0042712"/>
</dbReference>
<dbReference type="EnsemblMetazoa" id="FBtr0345807">
    <property type="protein sequence ID" value="FBpp0311793"/>
    <property type="gene ID" value="FBgn0042712"/>
</dbReference>
<dbReference type="GeneID" id="117365"/>
<dbReference type="KEGG" id="dme:Dmel_CG1898"/>
<dbReference type="UCSC" id="CG1898-RA">
    <property type="organism name" value="d. melanogaster"/>
</dbReference>
<dbReference type="AGR" id="FB:FBgn0042712"/>
<dbReference type="CTD" id="117365"/>
<dbReference type="FlyBase" id="FBgn0042712">
    <property type="gene designation" value="HBS1"/>
</dbReference>
<dbReference type="VEuPathDB" id="VectorBase:FBgn0042712"/>
<dbReference type="eggNOG" id="KOG0458">
    <property type="taxonomic scope" value="Eukaryota"/>
</dbReference>
<dbReference type="GeneTree" id="ENSGT00940000156274"/>
<dbReference type="HOGENOM" id="CLU_007265_3_6_1"/>
<dbReference type="InParanoid" id="Q9W074"/>
<dbReference type="OMA" id="VVQITCH"/>
<dbReference type="OrthoDB" id="342024at2759"/>
<dbReference type="PhylomeDB" id="Q9W074"/>
<dbReference type="Reactome" id="R-DME-429958">
    <property type="pathway name" value="mRNA decay by 3' to 5' exoribonuclease"/>
</dbReference>
<dbReference type="SignaLink" id="Q9W074"/>
<dbReference type="BioGRID-ORCS" id="117365">
    <property type="hits" value="0 hits in 1 CRISPR screen"/>
</dbReference>
<dbReference type="GenomeRNAi" id="117365"/>
<dbReference type="PRO" id="PR:Q9W074"/>
<dbReference type="Proteomes" id="UP000000803">
    <property type="component" value="Chromosome 3L"/>
</dbReference>
<dbReference type="Bgee" id="FBgn0042712">
    <property type="expression patterns" value="Expressed in early elongation stage spermatid (Drosophila) in testis and 81 other cell types or tissues"/>
</dbReference>
<dbReference type="ExpressionAtlas" id="Q9W074">
    <property type="expression patterns" value="baseline and differential"/>
</dbReference>
<dbReference type="GO" id="GO:0005737">
    <property type="term" value="C:cytoplasm"/>
    <property type="evidence" value="ECO:0000314"/>
    <property type="project" value="FlyBase"/>
</dbReference>
<dbReference type="GO" id="GO:0005525">
    <property type="term" value="F:GTP binding"/>
    <property type="evidence" value="ECO:0007669"/>
    <property type="project" value="UniProtKB-KW"/>
</dbReference>
<dbReference type="GO" id="GO:0003924">
    <property type="term" value="F:GTPase activity"/>
    <property type="evidence" value="ECO:0000318"/>
    <property type="project" value="GO_Central"/>
</dbReference>
<dbReference type="GO" id="GO:0050829">
    <property type="term" value="P:defense response to Gram-negative bacterium"/>
    <property type="evidence" value="ECO:0007001"/>
    <property type="project" value="FlyBase"/>
</dbReference>
<dbReference type="GO" id="GO:0045089">
    <property type="term" value="P:positive regulation of innate immune response"/>
    <property type="evidence" value="ECO:0007001"/>
    <property type="project" value="FlyBase"/>
</dbReference>
<dbReference type="GO" id="GO:0016441">
    <property type="term" value="P:post-transcriptional gene silencing"/>
    <property type="evidence" value="ECO:0000315"/>
    <property type="project" value="FlyBase"/>
</dbReference>
<dbReference type="GO" id="GO:0006417">
    <property type="term" value="P:regulation of translation"/>
    <property type="evidence" value="ECO:0007669"/>
    <property type="project" value="UniProtKB-KW"/>
</dbReference>
<dbReference type="GO" id="GO:0007291">
    <property type="term" value="P:sperm individualization"/>
    <property type="evidence" value="ECO:0000316"/>
    <property type="project" value="UniProtKB"/>
</dbReference>
<dbReference type="GO" id="GO:0048137">
    <property type="term" value="P:spermatocyte division"/>
    <property type="evidence" value="ECO:0000316"/>
    <property type="project" value="UniProtKB"/>
</dbReference>
<dbReference type="GO" id="GO:0006412">
    <property type="term" value="P:translation"/>
    <property type="evidence" value="ECO:0000318"/>
    <property type="project" value="GO_Central"/>
</dbReference>
<dbReference type="CDD" id="cd01883">
    <property type="entry name" value="EF1_alpha"/>
    <property type="match status" value="1"/>
</dbReference>
<dbReference type="CDD" id="cd16267">
    <property type="entry name" value="HBS1-like_II"/>
    <property type="match status" value="1"/>
</dbReference>
<dbReference type="CDD" id="cd04093">
    <property type="entry name" value="HBS1_C_III"/>
    <property type="match status" value="1"/>
</dbReference>
<dbReference type="FunFam" id="1.10.8.10:FF:000039">
    <property type="entry name" value="HBS1-like translational GTPase"/>
    <property type="match status" value="1"/>
</dbReference>
<dbReference type="FunFam" id="2.40.30.10:FF:000035">
    <property type="entry name" value="HBS1-like translational GTPase"/>
    <property type="match status" value="1"/>
</dbReference>
<dbReference type="FunFam" id="2.40.30.10:FF:000020">
    <property type="entry name" value="Translation elongation factor EF-1"/>
    <property type="match status" value="1"/>
</dbReference>
<dbReference type="FunFam" id="3.40.50.300:FF:000204">
    <property type="entry name" value="Translation elongation factor Tu"/>
    <property type="match status" value="1"/>
</dbReference>
<dbReference type="Gene3D" id="1.10.8.10">
    <property type="entry name" value="DNA helicase RuvA subunit, C-terminal domain"/>
    <property type="match status" value="1"/>
</dbReference>
<dbReference type="Gene3D" id="3.40.50.300">
    <property type="entry name" value="P-loop containing nucleotide triphosphate hydrolases"/>
    <property type="match status" value="1"/>
</dbReference>
<dbReference type="Gene3D" id="2.40.30.10">
    <property type="entry name" value="Translation factors"/>
    <property type="match status" value="2"/>
</dbReference>
<dbReference type="InterPro" id="IPR004161">
    <property type="entry name" value="EFTu-like_2"/>
</dbReference>
<dbReference type="InterPro" id="IPR054696">
    <property type="entry name" value="GTP-eEF1A_C"/>
</dbReference>
<dbReference type="InterPro" id="IPR015033">
    <property type="entry name" value="HBS1-like_N"/>
</dbReference>
<dbReference type="InterPro" id="IPR037189">
    <property type="entry name" value="HBS1-like_N_sf"/>
</dbReference>
<dbReference type="InterPro" id="IPR027417">
    <property type="entry name" value="P-loop_NTPase"/>
</dbReference>
<dbReference type="InterPro" id="IPR000795">
    <property type="entry name" value="T_Tr_GTP-bd_dom"/>
</dbReference>
<dbReference type="InterPro" id="IPR050100">
    <property type="entry name" value="TRAFAC_GTPase_members"/>
</dbReference>
<dbReference type="InterPro" id="IPR009000">
    <property type="entry name" value="Transl_B-barrel_sf"/>
</dbReference>
<dbReference type="InterPro" id="IPR009001">
    <property type="entry name" value="Transl_elong_EF1A/Init_IF2_C"/>
</dbReference>
<dbReference type="PANTHER" id="PTHR23115">
    <property type="entry name" value="TRANSLATION FACTOR"/>
    <property type="match status" value="1"/>
</dbReference>
<dbReference type="Pfam" id="PF22594">
    <property type="entry name" value="GTP-eEF1A_C"/>
    <property type="match status" value="1"/>
</dbReference>
<dbReference type="Pfam" id="PF00009">
    <property type="entry name" value="GTP_EFTU"/>
    <property type="match status" value="1"/>
</dbReference>
<dbReference type="Pfam" id="PF03144">
    <property type="entry name" value="GTP_EFTU_D2"/>
    <property type="match status" value="1"/>
</dbReference>
<dbReference type="Pfam" id="PF08938">
    <property type="entry name" value="HBS1_N"/>
    <property type="match status" value="1"/>
</dbReference>
<dbReference type="PRINTS" id="PR00315">
    <property type="entry name" value="ELONGATNFCT"/>
</dbReference>
<dbReference type="SUPFAM" id="SSF50465">
    <property type="entry name" value="EF-Tu/eEF-1alpha/eIF2-gamma C-terminal domain"/>
    <property type="match status" value="1"/>
</dbReference>
<dbReference type="SUPFAM" id="SSF109732">
    <property type="entry name" value="HBS1-like domain"/>
    <property type="match status" value="1"/>
</dbReference>
<dbReference type="SUPFAM" id="SSF52540">
    <property type="entry name" value="P-loop containing nucleoside triphosphate hydrolases"/>
    <property type="match status" value="1"/>
</dbReference>
<dbReference type="SUPFAM" id="SSF50447">
    <property type="entry name" value="Translation proteins"/>
    <property type="match status" value="1"/>
</dbReference>
<dbReference type="PROSITE" id="PS51722">
    <property type="entry name" value="G_TR_2"/>
    <property type="match status" value="1"/>
</dbReference>
<evidence type="ECO:0000250" key="1">
    <source>
        <dbReference type="UniProtKB" id="P32769"/>
    </source>
</evidence>
<evidence type="ECO:0000250" key="2">
    <source>
        <dbReference type="UniProtKB" id="Q9Y450"/>
    </source>
</evidence>
<evidence type="ECO:0000255" key="3">
    <source>
        <dbReference type="PROSITE-ProRule" id="PRU01059"/>
    </source>
</evidence>
<evidence type="ECO:0000256" key="4">
    <source>
        <dbReference type="SAM" id="MobiDB-lite"/>
    </source>
</evidence>
<evidence type="ECO:0000269" key="5">
    <source>
    </source>
</evidence>
<evidence type="ECO:0000269" key="6">
    <source>
    </source>
</evidence>
<evidence type="ECO:0000305" key="7"/>
<evidence type="ECO:0000312" key="8">
    <source>
        <dbReference type="EMBL" id="AAO41445.1"/>
    </source>
</evidence>
<evidence type="ECO:0000312" key="9">
    <source>
        <dbReference type="EMBL" id="ADA53579.1"/>
    </source>
</evidence>
<evidence type="ECO:0000312" key="10">
    <source>
        <dbReference type="FlyBase" id="FBgn0042712"/>
    </source>
</evidence>
<evidence type="ECO:0000312" key="11">
    <source>
        <dbReference type="Proteomes" id="UP000000803"/>
    </source>
</evidence>
<sequence length="670" mass="74165">MSRHRIVRTMDYNDEYDGYDDIYGHSVEDEHCISPTDAQQWLYDRARGQQSISAFISKNKDIQEEEADEDEDEDAAFAKARRDSESFQMPQLDEIEQAKLSSCVDEVRSVVGDAVSERRIVETSMKFDYDMQKILDEILNEETNKSAKPAVNKMKAPAAPVLPKTVSKTVPTPPPKISLKEPRRGFEIPSPKVPSSPVVSGRNTPVDISAGDDISRSSATVFKVSKEQAVRNARQLYEKERADQKSHIHMIVIGHVDAGKSTLMGHLLYDTGNVSQRVMHKHEQESKKLGKQSFMYAWVLDETGEERARGITMDVGQSRIETKTKIVTLLDAPGHKDFIPNMISGATQADVALLVVDATRGEFESGFELGGQTREHAILVRSLGVNQLGVVINKLDTVGWSQDRFTEIVTKLKSFLKLAGFKDSDVSFTPCSGLTGENLTKKAQEPALTNWYSGRHLLDVIENFKIPERAIDRPLRMSVSDIYKGTGSGFCISGRVETGVLCLNDKVLVGASREQAQVKSLTMNEFPQTCVFAGDQVSVTLPALDINNVTVGCIISDPQTPIPVTTRFQARIIVFNVKVPITMGFPVLLHHQSLIEPAVVCKLTASIHKSTGEVVKKKPRCLGNNSCALVELETSRPICIERYADFKELGRVMLRVAGVTIAAGMVTKIR</sequence>
<accession>Q9W074</accession>
<accession>Q86NR4</accession>